<protein>
    <recommendedName>
        <fullName evidence="1">3-hydroxyacyl-[acyl-carrier-protein] dehydratase FabZ</fullName>
        <ecNumber evidence="1">4.2.1.59</ecNumber>
    </recommendedName>
    <alternativeName>
        <fullName evidence="1">(3R)-hydroxymyristoyl-[acyl-carrier-protein] dehydratase</fullName>
        <shortName evidence="1">(3R)-hydroxymyristoyl-ACP dehydrase</shortName>
    </alternativeName>
    <alternativeName>
        <fullName evidence="1">Beta-hydroxyacyl-ACP dehydratase</fullName>
    </alternativeName>
</protein>
<feature type="chain" id="PRO_0000230828" description="3-hydroxyacyl-[acyl-carrier-protein] dehydratase FabZ">
    <location>
        <begin position="1"/>
        <end position="146"/>
    </location>
</feature>
<feature type="active site" evidence="1">
    <location>
        <position position="49"/>
    </location>
</feature>
<reference key="1">
    <citation type="journal article" date="2005" name="Proc. Natl. Acad. Sci. U.S.A.">
        <title>Comparison of the complete genome sequences of Pseudomonas syringae pv. syringae B728a and pv. tomato DC3000.</title>
        <authorList>
            <person name="Feil H."/>
            <person name="Feil W.S."/>
            <person name="Chain P."/>
            <person name="Larimer F."/>
            <person name="Dibartolo G."/>
            <person name="Copeland A."/>
            <person name="Lykidis A."/>
            <person name="Trong S."/>
            <person name="Nolan M."/>
            <person name="Goltsman E."/>
            <person name="Thiel J."/>
            <person name="Malfatti S."/>
            <person name="Loper J.E."/>
            <person name="Lapidus A."/>
            <person name="Detter J.C."/>
            <person name="Land M."/>
            <person name="Richardson P.M."/>
            <person name="Kyrpides N.C."/>
            <person name="Ivanova N."/>
            <person name="Lindow S.E."/>
        </authorList>
    </citation>
    <scope>NUCLEOTIDE SEQUENCE [LARGE SCALE GENOMIC DNA]</scope>
    <source>
        <strain>B728a</strain>
    </source>
</reference>
<name>FABZ_PSEU2</name>
<accession>Q4ZWR7</accession>
<evidence type="ECO:0000255" key="1">
    <source>
        <dbReference type="HAMAP-Rule" id="MF_00406"/>
    </source>
</evidence>
<keyword id="KW-0963">Cytoplasm</keyword>
<keyword id="KW-0441">Lipid A biosynthesis</keyword>
<keyword id="KW-0444">Lipid biosynthesis</keyword>
<keyword id="KW-0443">Lipid metabolism</keyword>
<keyword id="KW-0456">Lyase</keyword>
<sequence>MMDIKEIREYLPHRYPFLLVDRVTELDIENKNIRAYKNVSVNEPFFNGHFPEHPIMPGVLIIEAMAQAAGILAFKMLDSKPSDGTLYYFVGSDKLRFRQPVLPGDQLVLEAKFLSSKRQIWKFECKATVDGKAVCSAEIICAERKL</sequence>
<dbReference type="EC" id="4.2.1.59" evidence="1"/>
<dbReference type="EMBL" id="CP000075">
    <property type="protein sequence ID" value="AAY36405.1"/>
    <property type="molecule type" value="Genomic_DNA"/>
</dbReference>
<dbReference type="RefSeq" id="WP_002554719.1">
    <property type="nucleotide sequence ID" value="NC_007005.1"/>
</dbReference>
<dbReference type="RefSeq" id="YP_234443.1">
    <property type="nucleotide sequence ID" value="NC_007005.1"/>
</dbReference>
<dbReference type="SMR" id="Q4ZWR7"/>
<dbReference type="STRING" id="205918.Psyr_1354"/>
<dbReference type="GeneID" id="77277310"/>
<dbReference type="KEGG" id="psb:Psyr_1354"/>
<dbReference type="PATRIC" id="fig|205918.7.peg.1387"/>
<dbReference type="eggNOG" id="COG0764">
    <property type="taxonomic scope" value="Bacteria"/>
</dbReference>
<dbReference type="HOGENOM" id="CLU_078912_1_2_6"/>
<dbReference type="OrthoDB" id="9772788at2"/>
<dbReference type="Proteomes" id="UP000000426">
    <property type="component" value="Chromosome"/>
</dbReference>
<dbReference type="GO" id="GO:0005737">
    <property type="term" value="C:cytoplasm"/>
    <property type="evidence" value="ECO:0007669"/>
    <property type="project" value="UniProtKB-SubCell"/>
</dbReference>
<dbReference type="GO" id="GO:0016020">
    <property type="term" value="C:membrane"/>
    <property type="evidence" value="ECO:0007669"/>
    <property type="project" value="GOC"/>
</dbReference>
<dbReference type="GO" id="GO:0019171">
    <property type="term" value="F:(3R)-hydroxyacyl-[acyl-carrier-protein] dehydratase activity"/>
    <property type="evidence" value="ECO:0007669"/>
    <property type="project" value="UniProtKB-EC"/>
</dbReference>
<dbReference type="GO" id="GO:0006633">
    <property type="term" value="P:fatty acid biosynthetic process"/>
    <property type="evidence" value="ECO:0007669"/>
    <property type="project" value="UniProtKB-UniRule"/>
</dbReference>
<dbReference type="GO" id="GO:0009245">
    <property type="term" value="P:lipid A biosynthetic process"/>
    <property type="evidence" value="ECO:0007669"/>
    <property type="project" value="UniProtKB-UniRule"/>
</dbReference>
<dbReference type="CDD" id="cd01288">
    <property type="entry name" value="FabZ"/>
    <property type="match status" value="1"/>
</dbReference>
<dbReference type="FunFam" id="3.10.129.10:FF:000001">
    <property type="entry name" value="3-hydroxyacyl-[acyl-carrier-protein] dehydratase FabZ"/>
    <property type="match status" value="1"/>
</dbReference>
<dbReference type="Gene3D" id="3.10.129.10">
    <property type="entry name" value="Hotdog Thioesterase"/>
    <property type="match status" value="1"/>
</dbReference>
<dbReference type="HAMAP" id="MF_00406">
    <property type="entry name" value="FabZ"/>
    <property type="match status" value="1"/>
</dbReference>
<dbReference type="InterPro" id="IPR013114">
    <property type="entry name" value="FabA_FabZ"/>
</dbReference>
<dbReference type="InterPro" id="IPR010084">
    <property type="entry name" value="FabZ"/>
</dbReference>
<dbReference type="InterPro" id="IPR029069">
    <property type="entry name" value="HotDog_dom_sf"/>
</dbReference>
<dbReference type="NCBIfam" id="TIGR01750">
    <property type="entry name" value="fabZ"/>
    <property type="match status" value="1"/>
</dbReference>
<dbReference type="NCBIfam" id="NF000582">
    <property type="entry name" value="PRK00006.1"/>
    <property type="match status" value="1"/>
</dbReference>
<dbReference type="PANTHER" id="PTHR30272">
    <property type="entry name" value="3-HYDROXYACYL-[ACYL-CARRIER-PROTEIN] DEHYDRATASE"/>
    <property type="match status" value="1"/>
</dbReference>
<dbReference type="PANTHER" id="PTHR30272:SF1">
    <property type="entry name" value="3-HYDROXYACYL-[ACYL-CARRIER-PROTEIN] DEHYDRATASE"/>
    <property type="match status" value="1"/>
</dbReference>
<dbReference type="Pfam" id="PF07977">
    <property type="entry name" value="FabA"/>
    <property type="match status" value="1"/>
</dbReference>
<dbReference type="SUPFAM" id="SSF54637">
    <property type="entry name" value="Thioesterase/thiol ester dehydrase-isomerase"/>
    <property type="match status" value="1"/>
</dbReference>
<organism>
    <name type="scientific">Pseudomonas syringae pv. syringae (strain B728a)</name>
    <dbReference type="NCBI Taxonomy" id="205918"/>
    <lineage>
        <taxon>Bacteria</taxon>
        <taxon>Pseudomonadati</taxon>
        <taxon>Pseudomonadota</taxon>
        <taxon>Gammaproteobacteria</taxon>
        <taxon>Pseudomonadales</taxon>
        <taxon>Pseudomonadaceae</taxon>
        <taxon>Pseudomonas</taxon>
        <taxon>Pseudomonas syringae</taxon>
    </lineage>
</organism>
<gene>
    <name evidence="1" type="primary">fabZ</name>
    <name type="ordered locus">Psyr_1354</name>
</gene>
<proteinExistence type="inferred from homology"/>
<comment type="function">
    <text evidence="1">Involved in unsaturated fatty acids biosynthesis. Catalyzes the dehydration of short chain beta-hydroxyacyl-ACPs and long chain saturated and unsaturated beta-hydroxyacyl-ACPs.</text>
</comment>
<comment type="catalytic activity">
    <reaction evidence="1">
        <text>a (3R)-hydroxyacyl-[ACP] = a (2E)-enoyl-[ACP] + H2O</text>
        <dbReference type="Rhea" id="RHEA:13097"/>
        <dbReference type="Rhea" id="RHEA-COMP:9925"/>
        <dbReference type="Rhea" id="RHEA-COMP:9945"/>
        <dbReference type="ChEBI" id="CHEBI:15377"/>
        <dbReference type="ChEBI" id="CHEBI:78784"/>
        <dbReference type="ChEBI" id="CHEBI:78827"/>
        <dbReference type="EC" id="4.2.1.59"/>
    </reaction>
</comment>
<comment type="subcellular location">
    <subcellularLocation>
        <location evidence="1">Cytoplasm</location>
    </subcellularLocation>
</comment>
<comment type="similarity">
    <text evidence="1">Belongs to the thioester dehydratase family. FabZ subfamily.</text>
</comment>